<reference key="1">
    <citation type="journal article" date="2007" name="J. Bacteriol.">
        <title>Genome of the opportunistic pathogen Streptococcus sanguinis.</title>
        <authorList>
            <person name="Xu P."/>
            <person name="Alves J.M."/>
            <person name="Kitten T."/>
            <person name="Brown A."/>
            <person name="Chen Z."/>
            <person name="Ozaki L.S."/>
            <person name="Manque P."/>
            <person name="Ge X."/>
            <person name="Serrano M.G."/>
            <person name="Puiu D."/>
            <person name="Hendricks S."/>
            <person name="Wang Y."/>
            <person name="Chaplin M.D."/>
            <person name="Akan D."/>
            <person name="Paik S."/>
            <person name="Peterson D.L."/>
            <person name="Macrina F.L."/>
            <person name="Buck G.A."/>
        </authorList>
    </citation>
    <scope>NUCLEOTIDE SEQUENCE [LARGE SCALE GENOMIC DNA]</scope>
    <source>
        <strain>SK36</strain>
    </source>
</reference>
<proteinExistence type="inferred from homology"/>
<gene>
    <name evidence="1" type="primary">rpsH</name>
    <name type="ordered locus">SSA_0120</name>
</gene>
<accession>A3CK77</accession>
<sequence>MVMTDPIADFLTRIRNANQANHEVLEVPASNIKKGIAEILKREGFVKNVEIIEDDKQGIIRVFLKYGQNGEKVITGLKRISKPGLRVYKKREDLPKVLNGLGIAILSTSEGLLTDKEARQKNVGGEVIAYVW</sequence>
<name>RS8_STRSV</name>
<evidence type="ECO:0000255" key="1">
    <source>
        <dbReference type="HAMAP-Rule" id="MF_01302"/>
    </source>
</evidence>
<evidence type="ECO:0000305" key="2"/>
<comment type="function">
    <text evidence="1">One of the primary rRNA binding proteins, it binds directly to 16S rRNA central domain where it helps coordinate assembly of the platform of the 30S subunit.</text>
</comment>
<comment type="subunit">
    <text evidence="1">Part of the 30S ribosomal subunit. Contacts proteins S5 and S12.</text>
</comment>
<comment type="similarity">
    <text evidence="1">Belongs to the universal ribosomal protein uS8 family.</text>
</comment>
<organism>
    <name type="scientific">Streptococcus sanguinis (strain SK36)</name>
    <dbReference type="NCBI Taxonomy" id="388919"/>
    <lineage>
        <taxon>Bacteria</taxon>
        <taxon>Bacillati</taxon>
        <taxon>Bacillota</taxon>
        <taxon>Bacilli</taxon>
        <taxon>Lactobacillales</taxon>
        <taxon>Streptococcaceae</taxon>
        <taxon>Streptococcus</taxon>
    </lineage>
</organism>
<protein>
    <recommendedName>
        <fullName evidence="1">Small ribosomal subunit protein uS8</fullName>
    </recommendedName>
    <alternativeName>
        <fullName evidence="2">30S ribosomal protein S8</fullName>
    </alternativeName>
</protein>
<keyword id="KW-1185">Reference proteome</keyword>
<keyword id="KW-0687">Ribonucleoprotein</keyword>
<keyword id="KW-0689">Ribosomal protein</keyword>
<keyword id="KW-0694">RNA-binding</keyword>
<keyword id="KW-0699">rRNA-binding</keyword>
<feature type="chain" id="PRO_0000290946" description="Small ribosomal subunit protein uS8">
    <location>
        <begin position="1"/>
        <end position="132"/>
    </location>
</feature>
<dbReference type="EMBL" id="CP000387">
    <property type="protein sequence ID" value="ABN43582.1"/>
    <property type="molecule type" value="Genomic_DNA"/>
</dbReference>
<dbReference type="RefSeq" id="WP_002894501.1">
    <property type="nucleotide sequence ID" value="NC_009009.1"/>
</dbReference>
<dbReference type="RefSeq" id="YP_001034132.1">
    <property type="nucleotide sequence ID" value="NC_009009.1"/>
</dbReference>
<dbReference type="SMR" id="A3CK77"/>
<dbReference type="STRING" id="388919.SSA_0120"/>
<dbReference type="KEGG" id="ssa:SSA_0120"/>
<dbReference type="PATRIC" id="fig|388919.9.peg.114"/>
<dbReference type="eggNOG" id="COG0096">
    <property type="taxonomic scope" value="Bacteria"/>
</dbReference>
<dbReference type="HOGENOM" id="CLU_098428_0_2_9"/>
<dbReference type="OrthoDB" id="9802617at2"/>
<dbReference type="Proteomes" id="UP000002148">
    <property type="component" value="Chromosome"/>
</dbReference>
<dbReference type="GO" id="GO:1990904">
    <property type="term" value="C:ribonucleoprotein complex"/>
    <property type="evidence" value="ECO:0007669"/>
    <property type="project" value="UniProtKB-KW"/>
</dbReference>
<dbReference type="GO" id="GO:0005840">
    <property type="term" value="C:ribosome"/>
    <property type="evidence" value="ECO:0007669"/>
    <property type="project" value="UniProtKB-KW"/>
</dbReference>
<dbReference type="GO" id="GO:0019843">
    <property type="term" value="F:rRNA binding"/>
    <property type="evidence" value="ECO:0007669"/>
    <property type="project" value="UniProtKB-UniRule"/>
</dbReference>
<dbReference type="GO" id="GO:0003735">
    <property type="term" value="F:structural constituent of ribosome"/>
    <property type="evidence" value="ECO:0007669"/>
    <property type="project" value="InterPro"/>
</dbReference>
<dbReference type="GO" id="GO:0006412">
    <property type="term" value="P:translation"/>
    <property type="evidence" value="ECO:0007669"/>
    <property type="project" value="UniProtKB-UniRule"/>
</dbReference>
<dbReference type="FunFam" id="3.30.1370.30:FF:000002">
    <property type="entry name" value="30S ribosomal protein S8"/>
    <property type="match status" value="1"/>
</dbReference>
<dbReference type="FunFam" id="3.30.1490.10:FF:000001">
    <property type="entry name" value="30S ribosomal protein S8"/>
    <property type="match status" value="1"/>
</dbReference>
<dbReference type="Gene3D" id="3.30.1370.30">
    <property type="match status" value="1"/>
</dbReference>
<dbReference type="Gene3D" id="3.30.1490.10">
    <property type="match status" value="1"/>
</dbReference>
<dbReference type="HAMAP" id="MF_01302_B">
    <property type="entry name" value="Ribosomal_uS8_B"/>
    <property type="match status" value="1"/>
</dbReference>
<dbReference type="InterPro" id="IPR000630">
    <property type="entry name" value="Ribosomal_uS8"/>
</dbReference>
<dbReference type="InterPro" id="IPR047863">
    <property type="entry name" value="Ribosomal_uS8_CS"/>
</dbReference>
<dbReference type="InterPro" id="IPR035987">
    <property type="entry name" value="Ribosomal_uS8_sf"/>
</dbReference>
<dbReference type="NCBIfam" id="NF001109">
    <property type="entry name" value="PRK00136.1"/>
    <property type="match status" value="1"/>
</dbReference>
<dbReference type="PANTHER" id="PTHR11758">
    <property type="entry name" value="40S RIBOSOMAL PROTEIN S15A"/>
    <property type="match status" value="1"/>
</dbReference>
<dbReference type="Pfam" id="PF00410">
    <property type="entry name" value="Ribosomal_S8"/>
    <property type="match status" value="1"/>
</dbReference>
<dbReference type="SUPFAM" id="SSF56047">
    <property type="entry name" value="Ribosomal protein S8"/>
    <property type="match status" value="1"/>
</dbReference>
<dbReference type="PROSITE" id="PS00053">
    <property type="entry name" value="RIBOSOMAL_S8"/>
    <property type="match status" value="1"/>
</dbReference>